<evidence type="ECO:0000250" key="1"/>
<evidence type="ECO:0000255" key="2">
    <source>
        <dbReference type="PROSITE-ProRule" id="PRU00541"/>
    </source>
</evidence>
<evidence type="ECO:0000255" key="3">
    <source>
        <dbReference type="PROSITE-ProRule" id="PRU00542"/>
    </source>
</evidence>
<evidence type="ECO:0000256" key="4">
    <source>
        <dbReference type="SAM" id="MobiDB-lite"/>
    </source>
</evidence>
<evidence type="ECO:0000269" key="5">
    <source>
    </source>
</evidence>
<evidence type="ECO:0000269" key="6">
    <source>
    </source>
</evidence>
<evidence type="ECO:0000269" key="7">
    <source>
    </source>
</evidence>
<evidence type="ECO:0000269" key="8">
    <source>
    </source>
</evidence>
<protein>
    <recommendedName>
        <fullName>Pre-mRNA-splicing factor brr2</fullName>
        <ecNumber>3.6.4.13</ecNumber>
    </recommendedName>
    <alternativeName>
        <fullName>Pre-mRNA-splicing factor spp41</fullName>
    </alternativeName>
    <alternativeName>
        <fullName>Pre-mRNA-splicing helicase BRR2</fullName>
    </alternativeName>
</protein>
<feature type="chain" id="PRO_0000290645" description="Pre-mRNA-splicing factor brr2">
    <location>
        <begin position="1"/>
        <end position="2176"/>
    </location>
</feature>
<feature type="domain" description="Helicase ATP-binding 1" evidence="2">
    <location>
        <begin position="529"/>
        <end position="712"/>
    </location>
</feature>
<feature type="domain" description="Helicase C-terminal 1" evidence="3">
    <location>
        <begin position="723"/>
        <end position="956"/>
    </location>
</feature>
<feature type="domain" description="SEC63 1">
    <location>
        <begin position="1019"/>
        <end position="1324"/>
    </location>
</feature>
<feature type="domain" description="Helicase ATP-binding 2" evidence="2">
    <location>
        <begin position="1374"/>
        <end position="1550"/>
    </location>
</feature>
<feature type="domain" description="Helicase C-terminal 2" evidence="3">
    <location>
        <begin position="1587"/>
        <end position="1771"/>
    </location>
</feature>
<feature type="domain" description="SEC63 2">
    <location>
        <begin position="1848"/>
        <end position="2162"/>
    </location>
</feature>
<feature type="region of interest" description="Disordered" evidence="4">
    <location>
        <begin position="1"/>
        <end position="34"/>
    </location>
</feature>
<feature type="short sequence motif" description="DEAH box">
    <location>
        <begin position="654"/>
        <end position="657"/>
    </location>
</feature>
<feature type="compositionally biased region" description="Basic and acidic residues" evidence="4">
    <location>
        <begin position="1"/>
        <end position="23"/>
    </location>
</feature>
<feature type="compositionally biased region" description="Polar residues" evidence="4">
    <location>
        <begin position="25"/>
        <end position="34"/>
    </location>
</feature>
<feature type="binding site" evidence="2">
    <location>
        <begin position="542"/>
        <end position="549"/>
    </location>
    <ligand>
        <name>ATP</name>
        <dbReference type="ChEBI" id="CHEBI:30616"/>
    </ligand>
</feature>
<feature type="binding site" evidence="2">
    <location>
        <begin position="1387"/>
        <end position="1394"/>
    </location>
    <ligand>
        <name>ATP</name>
        <dbReference type="ChEBI" id="CHEBI:30616"/>
    </ligand>
</feature>
<feature type="mutagenesis site" description="In spp41-1." evidence="6">
    <original>A</original>
    <variation>E</variation>
    <location>
        <position position="311"/>
    </location>
</feature>
<gene>
    <name type="primary">brr2</name>
    <name type="synonym">spp41</name>
    <name type="ORF">SPAC9.03c</name>
</gene>
<comment type="function">
    <text evidence="1 6">Involved in pre-mRNA splicing. May be involved in endoplasmic reticulum-associated protein degradation (ERAD) and required for growth at low and high temperatures (By similarity). Required for pre-spliceosome formation, which is the first step of pre-mRNA splicing. This protein is associated with snRNP U5. Has a role in branch site-3' splice site selection. Associates with the branch site-3' splice 3'-exon region.</text>
</comment>
<comment type="catalytic activity">
    <reaction>
        <text>ATP + H2O = ADP + phosphate + H(+)</text>
        <dbReference type="Rhea" id="RHEA:13065"/>
        <dbReference type="ChEBI" id="CHEBI:15377"/>
        <dbReference type="ChEBI" id="CHEBI:15378"/>
        <dbReference type="ChEBI" id="CHEBI:30616"/>
        <dbReference type="ChEBI" id="CHEBI:43474"/>
        <dbReference type="ChEBI" id="CHEBI:456216"/>
        <dbReference type="EC" id="3.6.4.13"/>
    </reaction>
</comment>
<comment type="subunit">
    <text evidence="5 6 8">Belongs to the 40S cdc5-associated complex (or cwf complex), a spliceosome sub-complex reminiscent of a late-stage spliceosome composed of the U2, U5 and U6 snRNAs and at least brr2, cdc5, cwf2/prp3, cwf3/syf1, cwf4/syf3, cwf5/ecm2, spp42/cwf6, cwf7/spf27, cwf8, cwf9, cwf10, cwf11, cwf12, prp45/cwf13, cwf14, cwf15, cwf16, cwf17, cwf18, cwf19, cwf20, cwf21, cwf22, cwf23, cwf24, cwf25, cwf26, cyp7/cwf27, cwf28, cwf29/ist3, lea1, msl1, prp5/cwf1, prp10, prp12/sap130, prp17, prp22, sap61, sap62, sap114, sap145, slu7, smb1, smd1, smd3, smf1, smg1 and syf2. Interacts with prp1 (PubMed:11884590, PubMed:16133344). Interacts with tls1 (PubMed:25245948).</text>
</comment>
<comment type="subcellular location">
    <subcellularLocation>
        <location evidence="7">Cytoplasm</location>
    </subcellularLocation>
    <subcellularLocation>
        <location evidence="7">Nucleus</location>
    </subcellularLocation>
</comment>
<reference key="1">
    <citation type="journal article" date="2002" name="Nature">
        <title>The genome sequence of Schizosaccharomyces pombe.</title>
        <authorList>
            <person name="Wood V."/>
            <person name="Gwilliam R."/>
            <person name="Rajandream M.A."/>
            <person name="Lyne M.H."/>
            <person name="Lyne R."/>
            <person name="Stewart A."/>
            <person name="Sgouros J.G."/>
            <person name="Peat N."/>
            <person name="Hayles J."/>
            <person name="Baker S.G."/>
            <person name="Basham D."/>
            <person name="Bowman S."/>
            <person name="Brooks K."/>
            <person name="Brown D."/>
            <person name="Brown S."/>
            <person name="Chillingworth T."/>
            <person name="Churcher C.M."/>
            <person name="Collins M."/>
            <person name="Connor R."/>
            <person name="Cronin A."/>
            <person name="Davis P."/>
            <person name="Feltwell T."/>
            <person name="Fraser A."/>
            <person name="Gentles S."/>
            <person name="Goble A."/>
            <person name="Hamlin N."/>
            <person name="Harris D.E."/>
            <person name="Hidalgo J."/>
            <person name="Hodgson G."/>
            <person name="Holroyd S."/>
            <person name="Hornsby T."/>
            <person name="Howarth S."/>
            <person name="Huckle E.J."/>
            <person name="Hunt S."/>
            <person name="Jagels K."/>
            <person name="James K.D."/>
            <person name="Jones L."/>
            <person name="Jones M."/>
            <person name="Leather S."/>
            <person name="McDonald S."/>
            <person name="McLean J."/>
            <person name="Mooney P."/>
            <person name="Moule S."/>
            <person name="Mungall K.L."/>
            <person name="Murphy L.D."/>
            <person name="Niblett D."/>
            <person name="Odell C."/>
            <person name="Oliver K."/>
            <person name="O'Neil S."/>
            <person name="Pearson D."/>
            <person name="Quail M.A."/>
            <person name="Rabbinowitsch E."/>
            <person name="Rutherford K.M."/>
            <person name="Rutter S."/>
            <person name="Saunders D."/>
            <person name="Seeger K."/>
            <person name="Sharp S."/>
            <person name="Skelton J."/>
            <person name="Simmonds M.N."/>
            <person name="Squares R."/>
            <person name="Squares S."/>
            <person name="Stevens K."/>
            <person name="Taylor K."/>
            <person name="Taylor R.G."/>
            <person name="Tivey A."/>
            <person name="Walsh S.V."/>
            <person name="Warren T."/>
            <person name="Whitehead S."/>
            <person name="Woodward J.R."/>
            <person name="Volckaert G."/>
            <person name="Aert R."/>
            <person name="Robben J."/>
            <person name="Grymonprez B."/>
            <person name="Weltjens I."/>
            <person name="Vanstreels E."/>
            <person name="Rieger M."/>
            <person name="Schaefer M."/>
            <person name="Mueller-Auer S."/>
            <person name="Gabel C."/>
            <person name="Fuchs M."/>
            <person name="Duesterhoeft A."/>
            <person name="Fritzc C."/>
            <person name="Holzer E."/>
            <person name="Moestl D."/>
            <person name="Hilbert H."/>
            <person name="Borzym K."/>
            <person name="Langer I."/>
            <person name="Beck A."/>
            <person name="Lehrach H."/>
            <person name="Reinhardt R."/>
            <person name="Pohl T.M."/>
            <person name="Eger P."/>
            <person name="Zimmermann W."/>
            <person name="Wedler H."/>
            <person name="Wambutt R."/>
            <person name="Purnelle B."/>
            <person name="Goffeau A."/>
            <person name="Cadieu E."/>
            <person name="Dreano S."/>
            <person name="Gloux S."/>
            <person name="Lelaure V."/>
            <person name="Mottier S."/>
            <person name="Galibert F."/>
            <person name="Aves S.J."/>
            <person name="Xiang Z."/>
            <person name="Hunt C."/>
            <person name="Moore K."/>
            <person name="Hurst S.M."/>
            <person name="Lucas M."/>
            <person name="Rochet M."/>
            <person name="Gaillardin C."/>
            <person name="Tallada V.A."/>
            <person name="Garzon A."/>
            <person name="Thode G."/>
            <person name="Daga R.R."/>
            <person name="Cruzado L."/>
            <person name="Jimenez J."/>
            <person name="Sanchez M."/>
            <person name="del Rey F."/>
            <person name="Benito J."/>
            <person name="Dominguez A."/>
            <person name="Revuelta J.L."/>
            <person name="Moreno S."/>
            <person name="Armstrong J."/>
            <person name="Forsburg S.L."/>
            <person name="Cerutti L."/>
            <person name="Lowe T."/>
            <person name="McCombie W.R."/>
            <person name="Paulsen I."/>
            <person name="Potashkin J."/>
            <person name="Shpakovski G.V."/>
            <person name="Ussery D."/>
            <person name="Barrell B.G."/>
            <person name="Nurse P."/>
        </authorList>
    </citation>
    <scope>NUCLEOTIDE SEQUENCE [LARGE SCALE GENOMIC DNA]</scope>
    <source>
        <strain>972 / ATCC 24843</strain>
    </source>
</reference>
<reference key="2">
    <citation type="journal article" date="2002" name="Mol. Cell. Biol.">
        <title>Proteomics analysis reveals stable multiprotein complexes in both fission and budding yeasts containing Myb-related Cdc5p/Cef1p, novel pre-mRNA splicing factors, and snRNAs.</title>
        <authorList>
            <person name="Ohi M.D."/>
            <person name="Link A.J."/>
            <person name="Ren L."/>
            <person name="Jennings J.L."/>
            <person name="McDonald W.H."/>
            <person name="Gould K.L."/>
        </authorList>
    </citation>
    <scope>IDENTIFICATION IN THE CWF COMPLEX</scope>
    <scope>IDENTIFICATION BY MASS SPECTROMETRY</scope>
</reference>
<reference key="3">
    <citation type="journal article" date="2005" name="Curr. Genet.">
        <title>Multiple genetic and biochemical interactions of Brr2, Prp8, Prp31, Prp1 and Prp4 kinase suggest a function in the control of the activation of spliceosomes in Schizosaccharomyces pombe.</title>
        <authorList>
            <person name="Bottner C.A."/>
            <person name="Schmidt H."/>
            <person name="Vogel S."/>
            <person name="Michele M."/>
            <person name="Kaeufer N.F."/>
        </authorList>
    </citation>
    <scope>FUNCTION</scope>
    <scope>INTERACTION WITH PRP1</scope>
    <scope>MUTAGENESIS OF ALA-311</scope>
</reference>
<reference key="4">
    <citation type="journal article" date="2006" name="Nat. Biotechnol.">
        <title>ORFeome cloning and global analysis of protein localization in the fission yeast Schizosaccharomyces pombe.</title>
        <authorList>
            <person name="Matsuyama A."/>
            <person name="Arai R."/>
            <person name="Yashiroda Y."/>
            <person name="Shirai A."/>
            <person name="Kamata A."/>
            <person name="Sekido S."/>
            <person name="Kobayashi Y."/>
            <person name="Hashimoto A."/>
            <person name="Hamamoto M."/>
            <person name="Hiraoka Y."/>
            <person name="Horinouchi S."/>
            <person name="Yoshida M."/>
        </authorList>
    </citation>
    <scope>SUBCELLULAR LOCATION [LARGE SCALE ANALYSIS]</scope>
</reference>
<reference key="5">
    <citation type="journal article" date="2014" name="Nucleic Acids Res.">
        <title>Tls1 regulates splicing of shelterin components to control telomeric heterochromatin assembly and telomere length.</title>
        <authorList>
            <person name="Wang J."/>
            <person name="Tadeo X."/>
            <person name="Hou H."/>
            <person name="Andrews S."/>
            <person name="Moresco J.J."/>
            <person name="Yates J.R. III"/>
            <person name="Nagy P.L."/>
            <person name="Jia S."/>
        </authorList>
    </citation>
    <scope>INTERACTION WITH TLS1</scope>
</reference>
<keyword id="KW-0067">ATP-binding</keyword>
<keyword id="KW-0963">Cytoplasm</keyword>
<keyword id="KW-0347">Helicase</keyword>
<keyword id="KW-0378">Hydrolase</keyword>
<keyword id="KW-0547">Nucleotide-binding</keyword>
<keyword id="KW-0539">Nucleus</keyword>
<keyword id="KW-1185">Reference proteome</keyword>
<keyword id="KW-0677">Repeat</keyword>
<sequence length="2176" mass="248809">MSSAHPKGDSKEPPKHGNSKEKPNYGQSQYSYSAMSNLVTQADRRFVSRRDAEPTGEPESLVNRVSIADMGSRARIEKPSTLPLELTQEVQEVRLPRKDAESLEIGIRQPEREKRSSAILKYFDSFEILKYNPLTDETREVYDYILSFIQQYLGDQSPEILRSAADLIIELLKDSSLDEQGRKKQIEEVLSTELPQDRFSQLVNLGNRLTDYTVEQEEELNEEGVNESGVPVLFNEADEEEEAVEAMEEDEVAEDEDVVLETSISQEEEKKNIENPDTEVTFISADTKKVTEIPTVHPREIDAFWLQREIAKYFADAVVCQEKTNQAFEALSADYDLGELENELMSIFDYEHFYLVQLLTKNRWTIVSCTMLKRAATDEERLGVEEQIRAAGRSWILEALRPGAITIPDDGLNELNNNVVEKAEPAPVSEIPLSKTLTSHKIVPKHQVDLENYVFTEGSRLMSNKAVKLPEGSFRRTGKGYEEIHVPAPNKAVLGADERLVKIKELPEWSHQAFLNTQSLNRIQSHLYPIAFGTDENILLCAPTGAGKTNVAMLCILNELQKHLREDLSFNLQNFKIVYIAPLKALVQEMVNNFSKRLTPYNIRVAELTGDSQLTKQQISETQIIVTTPEKWDIITRKANDLSYVNLVRLVIIDEVHLLHDERGPVLESIVARIFRHQEETLEQVRLVGLSATLPNYTDVASFLHVDPKKGLFYFDSTYRPCPLKQEFIGITEKTPFKRMQTTNEACYEKVMQHAGKNQVLIFVHSRKETAKTARFIRDKALEEETIGHLLRSDAASREILRAEADSTSDENLKDLLPYGFAIHHAGMRREDRQTSEDLFADGTIQVLVSTATLAWGVNLPAHTVIIKGTQVYSPEKGIWTELSPQDVLQMLGRAGRPQFDTYGEGIIITAHSELQYYLSLMNQQLPIESQFMRRLADCLNAEVSLGTVRSIEDGVDWLGYTYLYVRMLRSPALYSVGPEYDDDKYLVQKRADLLHSAAILLEKCKLLVYNRQSGTLTATELGKVAASYYVTHNSMAIYNRLLMQTTSFIELFRVFSFSDEFKHIPVREEEKVELAKLLERVPIPIRERLDEPAAKINALLQSYISRQRLDGFALVADMVYVTQSAGRIMRAIFEISLRRGWSSVATLSLDTCKMIEKRLWPTMSPLRQFPNCPSEVIRRVEKKEFPWQRYFDLDPAELGELVGVPKEGRRVYNMVQSFPRLSVEAHVQPITRSLVRVELVINSQFNWDDHLSGTSEAFWILVEDVDGDRLLHYEQFFLLKKYKDDEHIVNFTVPLLEPLPPCYFIKIVSDRWLHSITKVPLSFQRLIMPEKFPAPTPLLDLQNAPVSSLNNPSFISLYPNFKFFNKIQTQVFNSVYKTNDSVFIGAPNGSGKTVCAELALLHHWSQEDYGTAVYIAPIQEIVDRRYEEWYGKFSDLGDGKVLVKLTGERSQDLKLIQVADLIFCTPSQWDSLSKRWRSMRSIQKVDFYICDELQLLGGFYGPLYEIVISRIRYMAVQLEKNIRVVGLSVSVANARDLGEWLGTSPQCIFNFSPKDRPNPLTIHLQSFSITHFPSLMLAMSKPIYRSLKNFISQRKSTIVFTPDRKVAKQLAFDLVTFSMADEDEYLFSLMENEAFNKVEDAALQQSLKHGIAYISEITSSNDQNIVQYLYRHGLIKVLIASRDVIYSLKAKSNAVIVMGTQYYDGKEHRYIDYPISELLQMLGFTASIGSSELSQVILMTVTTKKEYYKKFLNEPLPMESHLQVWLHDAFVSEISTQTIESKQDAVDWLTWSYMYRRLVANPAYYGLQDITHESVSEFLSDLVETTMNDLSEARLITVDDEDDSCVALNLAMIASHYGITYITMQTFALSLSERTKMKGLLEIVTSAAEYEQLPIRKYEDIVLERIHSRLPVRLSNPNYEDPHTKSFILLAAHFSRFELPPGLVIDQKFILTRVHNLLGACVDTLSSEGHLIACIRPMEMSQMVTQALWDRDSPLKQIPYFDDALIERCNKEGVHDVFDIIDLDDEKRTELLHMDNAHLAKCAEFINKYPDIDIDFEIEDSEDVHANSPSVLIVQLTRELEEDEEVDTTVIAPYFPAQKTEHWWLVISDDKTLLAIKKITLGRSLTTKMEFVPPAMGTLKYKLSCFSDSYMGVDYEKEFECNVLEPLDTEMEDGE</sequence>
<dbReference type="EC" id="3.6.4.13"/>
<dbReference type="EMBL" id="CU329670">
    <property type="protein sequence ID" value="CAB57421.1"/>
    <property type="molecule type" value="Genomic_DNA"/>
</dbReference>
<dbReference type="PIR" id="T39188">
    <property type="entry name" value="T39188"/>
</dbReference>
<dbReference type="RefSeq" id="NP_593346.1">
    <property type="nucleotide sequence ID" value="NM_001018778.2"/>
</dbReference>
<dbReference type="SMR" id="Q9UT24"/>
<dbReference type="BioGRID" id="280090">
    <property type="interactions" value="58"/>
</dbReference>
<dbReference type="FunCoup" id="Q9UT24">
    <property type="interactions" value="1069"/>
</dbReference>
<dbReference type="IntAct" id="Q9UT24">
    <property type="interactions" value="8"/>
</dbReference>
<dbReference type="STRING" id="284812.Q9UT24"/>
<dbReference type="iPTMnet" id="Q9UT24"/>
<dbReference type="PaxDb" id="4896-SPAC9.03c.1"/>
<dbReference type="EnsemblFungi" id="SPAC9.03c.1">
    <property type="protein sequence ID" value="SPAC9.03c.1:pep"/>
    <property type="gene ID" value="SPAC9.03c"/>
</dbReference>
<dbReference type="GeneID" id="2543676"/>
<dbReference type="KEGG" id="spo:2543676"/>
<dbReference type="PomBase" id="SPAC9.03c">
    <property type="gene designation" value="brr2"/>
</dbReference>
<dbReference type="VEuPathDB" id="FungiDB:SPAC9.03c"/>
<dbReference type="eggNOG" id="KOG0951">
    <property type="taxonomic scope" value="Eukaryota"/>
</dbReference>
<dbReference type="HOGENOM" id="CLU_000335_1_0_1"/>
<dbReference type="InParanoid" id="Q9UT24"/>
<dbReference type="OMA" id="MNPKEFN"/>
<dbReference type="PhylomeDB" id="Q9UT24"/>
<dbReference type="Reactome" id="R-SPO-72163">
    <property type="pathway name" value="mRNA Splicing - Major Pathway"/>
</dbReference>
<dbReference type="PRO" id="PR:Q9UT24"/>
<dbReference type="Proteomes" id="UP000002485">
    <property type="component" value="Chromosome I"/>
</dbReference>
<dbReference type="GO" id="GO:0005829">
    <property type="term" value="C:cytosol"/>
    <property type="evidence" value="ECO:0007005"/>
    <property type="project" value="PomBase"/>
</dbReference>
<dbReference type="GO" id="GO:0005634">
    <property type="term" value="C:nucleus"/>
    <property type="evidence" value="ECO:0007005"/>
    <property type="project" value="PomBase"/>
</dbReference>
<dbReference type="GO" id="GO:0071014">
    <property type="term" value="C:post-mRNA release spliceosomal complex"/>
    <property type="evidence" value="ECO:0000314"/>
    <property type="project" value="PomBase"/>
</dbReference>
<dbReference type="GO" id="GO:0005681">
    <property type="term" value="C:spliceosomal complex"/>
    <property type="evidence" value="ECO:0000314"/>
    <property type="project" value="PomBase"/>
</dbReference>
<dbReference type="GO" id="GO:0046540">
    <property type="term" value="C:U4/U6 x U5 tri-snRNP complex"/>
    <property type="evidence" value="ECO:0000266"/>
    <property type="project" value="PomBase"/>
</dbReference>
<dbReference type="GO" id="GO:0005682">
    <property type="term" value="C:U5 snRNP"/>
    <property type="evidence" value="ECO:0000314"/>
    <property type="project" value="PomBase"/>
</dbReference>
<dbReference type="GO" id="GO:0005524">
    <property type="term" value="F:ATP binding"/>
    <property type="evidence" value="ECO:0007669"/>
    <property type="project" value="UniProtKB-KW"/>
</dbReference>
<dbReference type="GO" id="GO:0016887">
    <property type="term" value="F:ATP hydrolysis activity"/>
    <property type="evidence" value="ECO:0000303"/>
    <property type="project" value="PomBase"/>
</dbReference>
<dbReference type="GO" id="GO:0003676">
    <property type="term" value="F:nucleic acid binding"/>
    <property type="evidence" value="ECO:0007669"/>
    <property type="project" value="InterPro"/>
</dbReference>
<dbReference type="GO" id="GO:0003724">
    <property type="term" value="F:RNA helicase activity"/>
    <property type="evidence" value="ECO:0000318"/>
    <property type="project" value="GO_Central"/>
</dbReference>
<dbReference type="GO" id="GO:0045292">
    <property type="term" value="P:mRNA cis splicing, via spliceosome"/>
    <property type="evidence" value="ECO:0000269"/>
    <property type="project" value="PomBase"/>
</dbReference>
<dbReference type="GO" id="GO:0000393">
    <property type="term" value="P:spliceosomal conformational changes to generate catalytic conformation"/>
    <property type="evidence" value="ECO:0000316"/>
    <property type="project" value="PomBase"/>
</dbReference>
<dbReference type="GO" id="GO:0000388">
    <property type="term" value="P:spliceosome conformational change to release U4 (or U4atac) and U1 (or U11)"/>
    <property type="evidence" value="ECO:0000318"/>
    <property type="project" value="GO_Central"/>
</dbReference>
<dbReference type="CDD" id="cd18019">
    <property type="entry name" value="DEXHc_Brr2_1"/>
    <property type="match status" value="1"/>
</dbReference>
<dbReference type="CDD" id="cd18021">
    <property type="entry name" value="DEXHc_Brr2_2"/>
    <property type="match status" value="1"/>
</dbReference>
<dbReference type="CDD" id="cd18795">
    <property type="entry name" value="SF2_C_Ski2"/>
    <property type="match status" value="1"/>
</dbReference>
<dbReference type="FunFam" id="1.10.3380.10:FF:000002">
    <property type="entry name" value="Activating signal cointegrator 1 complex subunit 3"/>
    <property type="match status" value="1"/>
</dbReference>
<dbReference type="FunFam" id="2.60.40.150:FF:000133">
    <property type="entry name" value="Pre-mRNA splicing helicase, putative"/>
    <property type="match status" value="1"/>
</dbReference>
<dbReference type="FunFam" id="2.60.40.150:FF:000004">
    <property type="entry name" value="RNA helicase, activating signal cointegrator 1"/>
    <property type="match status" value="1"/>
</dbReference>
<dbReference type="FunFam" id="3.40.50.300:FF:000102">
    <property type="entry name" value="RNA helicase, activating signal cointegrator 1"/>
    <property type="match status" value="1"/>
</dbReference>
<dbReference type="FunFam" id="1.10.10.10:FF:000012">
    <property type="entry name" value="U5 small nuclear ribonucleoprotein helicase"/>
    <property type="match status" value="1"/>
</dbReference>
<dbReference type="FunFam" id="1.10.10.10:FF:000024">
    <property type="entry name" value="U5 small nuclear ribonucleoprotein helicase"/>
    <property type="match status" value="1"/>
</dbReference>
<dbReference type="FunFam" id="1.10.150.20:FF:000004">
    <property type="entry name" value="U5 small nuclear ribonucleoprotein helicase"/>
    <property type="match status" value="1"/>
</dbReference>
<dbReference type="FunFam" id="1.10.3380.10:FF:000001">
    <property type="entry name" value="U5 small nuclear ribonucleoprotein helicase"/>
    <property type="match status" value="1"/>
</dbReference>
<dbReference type="FunFam" id="3.40.50.300:FF:000062">
    <property type="entry name" value="U5 small nuclear ribonucleoprotein helicase"/>
    <property type="match status" value="1"/>
</dbReference>
<dbReference type="FunFam" id="3.40.50.300:FF:000254">
    <property type="entry name" value="U5 small nuclear ribonucleoprotein helicase"/>
    <property type="match status" value="1"/>
</dbReference>
<dbReference type="FunFam" id="1.10.150.20:FF:000013">
    <property type="entry name" value="U5 small nuclear ribonucleoprotein kDa helicase"/>
    <property type="match status" value="1"/>
</dbReference>
<dbReference type="Gene3D" id="1.10.150.20">
    <property type="entry name" value="5' to 3' exonuclease, C-terminal subdomain"/>
    <property type="match status" value="2"/>
</dbReference>
<dbReference type="Gene3D" id="2.60.40.150">
    <property type="entry name" value="C2 domain"/>
    <property type="match status" value="2"/>
</dbReference>
<dbReference type="Gene3D" id="3.40.50.300">
    <property type="entry name" value="P-loop containing nucleotide triphosphate hydrolases"/>
    <property type="match status" value="4"/>
</dbReference>
<dbReference type="Gene3D" id="1.10.3380.10">
    <property type="entry name" value="Sec63 N-terminal domain-like domain"/>
    <property type="match status" value="2"/>
</dbReference>
<dbReference type="Gene3D" id="1.10.10.10">
    <property type="entry name" value="Winged helix-like DNA-binding domain superfamily/Winged helix DNA-binding domain"/>
    <property type="match status" value="2"/>
</dbReference>
<dbReference type="InterPro" id="IPR003593">
    <property type="entry name" value="AAA+_ATPase"/>
</dbReference>
<dbReference type="InterPro" id="IPR041094">
    <property type="entry name" value="Brr2_helicase_PWI"/>
</dbReference>
<dbReference type="InterPro" id="IPR048863">
    <property type="entry name" value="BRR2_plug"/>
</dbReference>
<dbReference type="InterPro" id="IPR035892">
    <property type="entry name" value="C2_domain_sf"/>
</dbReference>
<dbReference type="InterPro" id="IPR011545">
    <property type="entry name" value="DEAD/DEAH_box_helicase_dom"/>
</dbReference>
<dbReference type="InterPro" id="IPR050474">
    <property type="entry name" value="Hel308_SKI2-like"/>
</dbReference>
<dbReference type="InterPro" id="IPR014001">
    <property type="entry name" value="Helicase_ATP-bd"/>
</dbReference>
<dbReference type="InterPro" id="IPR001650">
    <property type="entry name" value="Helicase_C-like"/>
</dbReference>
<dbReference type="InterPro" id="IPR014756">
    <property type="entry name" value="Ig_E-set"/>
</dbReference>
<dbReference type="InterPro" id="IPR027417">
    <property type="entry name" value="P-loop_NTPase"/>
</dbReference>
<dbReference type="InterPro" id="IPR004179">
    <property type="entry name" value="Sec63-dom"/>
</dbReference>
<dbReference type="InterPro" id="IPR036388">
    <property type="entry name" value="WH-like_DNA-bd_sf"/>
</dbReference>
<dbReference type="InterPro" id="IPR036390">
    <property type="entry name" value="WH_DNA-bd_sf"/>
</dbReference>
<dbReference type="PANTHER" id="PTHR47961:SF4">
    <property type="entry name" value="ACTIVATING SIGNAL COINTEGRATOR 1 COMPLEX SUBUNIT 3"/>
    <property type="match status" value="1"/>
</dbReference>
<dbReference type="PANTHER" id="PTHR47961">
    <property type="entry name" value="DNA POLYMERASE THETA, PUTATIVE (AFU_ORTHOLOGUE AFUA_1G05260)-RELATED"/>
    <property type="match status" value="1"/>
</dbReference>
<dbReference type="Pfam" id="PF21188">
    <property type="entry name" value="BRR2_plug"/>
    <property type="match status" value="1"/>
</dbReference>
<dbReference type="Pfam" id="PF00270">
    <property type="entry name" value="DEAD"/>
    <property type="match status" value="2"/>
</dbReference>
<dbReference type="Pfam" id="PF00271">
    <property type="entry name" value="Helicase_C"/>
    <property type="match status" value="1"/>
</dbReference>
<dbReference type="Pfam" id="PF18149">
    <property type="entry name" value="Helicase_PWI"/>
    <property type="match status" value="1"/>
</dbReference>
<dbReference type="Pfam" id="PF02889">
    <property type="entry name" value="Sec63"/>
    <property type="match status" value="2"/>
</dbReference>
<dbReference type="Pfam" id="PF23445">
    <property type="entry name" value="SNRNP200_wHTH"/>
    <property type="match status" value="2"/>
</dbReference>
<dbReference type="PIRSF" id="PIRSF039073">
    <property type="entry name" value="BRR2"/>
    <property type="match status" value="1"/>
</dbReference>
<dbReference type="SMART" id="SM00382">
    <property type="entry name" value="AAA"/>
    <property type="match status" value="2"/>
</dbReference>
<dbReference type="SMART" id="SM00487">
    <property type="entry name" value="DEXDc"/>
    <property type="match status" value="2"/>
</dbReference>
<dbReference type="SMART" id="SM00490">
    <property type="entry name" value="HELICc"/>
    <property type="match status" value="1"/>
</dbReference>
<dbReference type="SMART" id="SM00973">
    <property type="entry name" value="Sec63"/>
    <property type="match status" value="2"/>
</dbReference>
<dbReference type="SUPFAM" id="SSF81296">
    <property type="entry name" value="E set domains"/>
    <property type="match status" value="1"/>
</dbReference>
<dbReference type="SUPFAM" id="SSF52540">
    <property type="entry name" value="P-loop containing nucleoside triphosphate hydrolases"/>
    <property type="match status" value="4"/>
</dbReference>
<dbReference type="SUPFAM" id="SSF158702">
    <property type="entry name" value="Sec63 N-terminal domain-like"/>
    <property type="match status" value="2"/>
</dbReference>
<dbReference type="SUPFAM" id="SSF46785">
    <property type="entry name" value="Winged helix' DNA-binding domain"/>
    <property type="match status" value="1"/>
</dbReference>
<dbReference type="PROSITE" id="PS51192">
    <property type="entry name" value="HELICASE_ATP_BIND_1"/>
    <property type="match status" value="2"/>
</dbReference>
<dbReference type="PROSITE" id="PS51194">
    <property type="entry name" value="HELICASE_CTER"/>
    <property type="match status" value="2"/>
</dbReference>
<name>BRR2_SCHPO</name>
<accession>Q9UT24</accession>
<proteinExistence type="evidence at protein level"/>
<organism>
    <name type="scientific">Schizosaccharomyces pombe (strain 972 / ATCC 24843)</name>
    <name type="common">Fission yeast</name>
    <dbReference type="NCBI Taxonomy" id="284812"/>
    <lineage>
        <taxon>Eukaryota</taxon>
        <taxon>Fungi</taxon>
        <taxon>Dikarya</taxon>
        <taxon>Ascomycota</taxon>
        <taxon>Taphrinomycotina</taxon>
        <taxon>Schizosaccharomycetes</taxon>
        <taxon>Schizosaccharomycetales</taxon>
        <taxon>Schizosaccharomycetaceae</taxon>
        <taxon>Schizosaccharomyces</taxon>
    </lineage>
</organism>